<proteinExistence type="inferred from homology"/>
<organism>
    <name type="scientific">Escherichia coli (strain K12 / MC4100 / BW2952)</name>
    <dbReference type="NCBI Taxonomy" id="595496"/>
    <lineage>
        <taxon>Bacteria</taxon>
        <taxon>Pseudomonadati</taxon>
        <taxon>Pseudomonadota</taxon>
        <taxon>Gammaproteobacteria</taxon>
        <taxon>Enterobacterales</taxon>
        <taxon>Enterobacteriaceae</taxon>
        <taxon>Escherichia</taxon>
    </lineage>
</organism>
<reference key="1">
    <citation type="journal article" date="2009" name="J. Bacteriol.">
        <title>Genomic sequencing reveals regulatory mutations and recombinational events in the widely used MC4100 lineage of Escherichia coli K-12.</title>
        <authorList>
            <person name="Ferenci T."/>
            <person name="Zhou Z."/>
            <person name="Betteridge T."/>
            <person name="Ren Y."/>
            <person name="Liu Y."/>
            <person name="Feng L."/>
            <person name="Reeves P.R."/>
            <person name="Wang L."/>
        </authorList>
    </citation>
    <scope>NUCLEOTIDE SEQUENCE [LARGE SCALE GENOMIC DNA]</scope>
    <source>
        <strain>K12 / MC4100 / BW2952</strain>
    </source>
</reference>
<feature type="chain" id="PRO_1000214336" description="Small ribosomal subunit protein uS3">
    <location>
        <begin position="1"/>
        <end position="233"/>
    </location>
</feature>
<feature type="domain" description="KH type-2" evidence="1">
    <location>
        <begin position="39"/>
        <end position="107"/>
    </location>
</feature>
<keyword id="KW-0687">Ribonucleoprotein</keyword>
<keyword id="KW-0689">Ribosomal protein</keyword>
<keyword id="KW-0694">RNA-binding</keyword>
<keyword id="KW-0699">rRNA-binding</keyword>
<dbReference type="EMBL" id="CP001396">
    <property type="protein sequence ID" value="ACR61796.1"/>
    <property type="molecule type" value="Genomic_DNA"/>
</dbReference>
<dbReference type="RefSeq" id="WP_000529945.1">
    <property type="nucleotide sequence ID" value="NC_012759.1"/>
</dbReference>
<dbReference type="SMR" id="C4ZUG9"/>
<dbReference type="GeneID" id="97603663"/>
<dbReference type="KEGG" id="ebw:BWG_3005"/>
<dbReference type="HOGENOM" id="CLU_058591_0_2_6"/>
<dbReference type="GO" id="GO:0022627">
    <property type="term" value="C:cytosolic small ribosomal subunit"/>
    <property type="evidence" value="ECO:0007669"/>
    <property type="project" value="TreeGrafter"/>
</dbReference>
<dbReference type="GO" id="GO:0003729">
    <property type="term" value="F:mRNA binding"/>
    <property type="evidence" value="ECO:0007669"/>
    <property type="project" value="UniProtKB-UniRule"/>
</dbReference>
<dbReference type="GO" id="GO:0019843">
    <property type="term" value="F:rRNA binding"/>
    <property type="evidence" value="ECO:0007669"/>
    <property type="project" value="UniProtKB-UniRule"/>
</dbReference>
<dbReference type="GO" id="GO:0003735">
    <property type="term" value="F:structural constituent of ribosome"/>
    <property type="evidence" value="ECO:0007669"/>
    <property type="project" value="InterPro"/>
</dbReference>
<dbReference type="GO" id="GO:0006412">
    <property type="term" value="P:translation"/>
    <property type="evidence" value="ECO:0007669"/>
    <property type="project" value="UniProtKB-UniRule"/>
</dbReference>
<dbReference type="CDD" id="cd02412">
    <property type="entry name" value="KH-II_30S_S3"/>
    <property type="match status" value="1"/>
</dbReference>
<dbReference type="FunFam" id="3.30.1140.32:FF:000001">
    <property type="entry name" value="30S ribosomal protein S3"/>
    <property type="match status" value="1"/>
</dbReference>
<dbReference type="FunFam" id="3.30.300.20:FF:000001">
    <property type="entry name" value="30S ribosomal protein S3"/>
    <property type="match status" value="1"/>
</dbReference>
<dbReference type="Gene3D" id="3.30.300.20">
    <property type="match status" value="1"/>
</dbReference>
<dbReference type="Gene3D" id="3.30.1140.32">
    <property type="entry name" value="Ribosomal protein S3, C-terminal domain"/>
    <property type="match status" value="1"/>
</dbReference>
<dbReference type="HAMAP" id="MF_01309_B">
    <property type="entry name" value="Ribosomal_uS3_B"/>
    <property type="match status" value="1"/>
</dbReference>
<dbReference type="InterPro" id="IPR004087">
    <property type="entry name" value="KH_dom"/>
</dbReference>
<dbReference type="InterPro" id="IPR015946">
    <property type="entry name" value="KH_dom-like_a/b"/>
</dbReference>
<dbReference type="InterPro" id="IPR004044">
    <property type="entry name" value="KH_dom_type_2"/>
</dbReference>
<dbReference type="InterPro" id="IPR009019">
    <property type="entry name" value="KH_sf_prok-type"/>
</dbReference>
<dbReference type="InterPro" id="IPR036419">
    <property type="entry name" value="Ribosomal_S3_C_sf"/>
</dbReference>
<dbReference type="InterPro" id="IPR005704">
    <property type="entry name" value="Ribosomal_uS3_bac-typ"/>
</dbReference>
<dbReference type="InterPro" id="IPR001351">
    <property type="entry name" value="Ribosomal_uS3_C"/>
</dbReference>
<dbReference type="InterPro" id="IPR018280">
    <property type="entry name" value="Ribosomal_uS3_CS"/>
</dbReference>
<dbReference type="NCBIfam" id="TIGR01009">
    <property type="entry name" value="rpsC_bact"/>
    <property type="match status" value="1"/>
</dbReference>
<dbReference type="PANTHER" id="PTHR11760">
    <property type="entry name" value="30S/40S RIBOSOMAL PROTEIN S3"/>
    <property type="match status" value="1"/>
</dbReference>
<dbReference type="PANTHER" id="PTHR11760:SF19">
    <property type="entry name" value="SMALL RIBOSOMAL SUBUNIT PROTEIN US3C"/>
    <property type="match status" value="1"/>
</dbReference>
<dbReference type="Pfam" id="PF07650">
    <property type="entry name" value="KH_2"/>
    <property type="match status" value="1"/>
</dbReference>
<dbReference type="Pfam" id="PF00189">
    <property type="entry name" value="Ribosomal_S3_C"/>
    <property type="match status" value="1"/>
</dbReference>
<dbReference type="SMART" id="SM00322">
    <property type="entry name" value="KH"/>
    <property type="match status" value="1"/>
</dbReference>
<dbReference type="SUPFAM" id="SSF54814">
    <property type="entry name" value="Prokaryotic type KH domain (KH-domain type II)"/>
    <property type="match status" value="1"/>
</dbReference>
<dbReference type="SUPFAM" id="SSF54821">
    <property type="entry name" value="Ribosomal protein S3 C-terminal domain"/>
    <property type="match status" value="1"/>
</dbReference>
<dbReference type="PROSITE" id="PS50823">
    <property type="entry name" value="KH_TYPE_2"/>
    <property type="match status" value="1"/>
</dbReference>
<dbReference type="PROSITE" id="PS00548">
    <property type="entry name" value="RIBOSOMAL_S3"/>
    <property type="match status" value="1"/>
</dbReference>
<sequence>MGQKVHPNGIRLGIVKPWNSTWFANTKEFADNLDSDFKVRQYLTKELAKASVSRIVIERPAKSIRVTIHTARPGIVIGKKGEDVEKLRKVVADIAGVPAQINIAEVRKPELDAKLVADSITSQLERRVMFRRAMKRAVQNAMRLGAKGIKVEVSGRLGGAEIARTEWYREGRVPLHTLRADIDYNTSEAHTTYGVIGVKVWIFKGEILGGMAAVEQPEKPAAQPKKQQRKGRK</sequence>
<accession>C4ZUG9</accession>
<name>RS3_ECOBW</name>
<comment type="function">
    <text evidence="1">Binds the lower part of the 30S subunit head. Binds mRNA in the 70S ribosome, positioning it for translation.</text>
</comment>
<comment type="subunit">
    <text evidence="1">Part of the 30S ribosomal subunit. Forms a tight complex with proteins S10 and S14.</text>
</comment>
<comment type="similarity">
    <text evidence="1">Belongs to the universal ribosomal protein uS3 family.</text>
</comment>
<gene>
    <name evidence="1" type="primary">rpsC</name>
    <name type="ordered locus">BWG_3005</name>
</gene>
<evidence type="ECO:0000255" key="1">
    <source>
        <dbReference type="HAMAP-Rule" id="MF_01309"/>
    </source>
</evidence>
<evidence type="ECO:0000305" key="2"/>
<protein>
    <recommendedName>
        <fullName evidence="1">Small ribosomal subunit protein uS3</fullName>
    </recommendedName>
    <alternativeName>
        <fullName evidence="2">30S ribosomal protein S3</fullName>
    </alternativeName>
</protein>